<gene>
    <name evidence="1" type="primary">rpsQ</name>
    <name type="ordered locus">Hac_0145</name>
</gene>
<reference key="1">
    <citation type="journal article" date="2006" name="PLoS Genet.">
        <title>Who ate whom? Adaptive Helicobacter genomic changes that accompanied a host jump from early humans to large felines.</title>
        <authorList>
            <person name="Eppinger M."/>
            <person name="Baar C."/>
            <person name="Linz B."/>
            <person name="Raddatz G."/>
            <person name="Lanz C."/>
            <person name="Keller H."/>
            <person name="Morelli G."/>
            <person name="Gressmann H."/>
            <person name="Achtman M."/>
            <person name="Schuster S.C."/>
        </authorList>
    </citation>
    <scope>NUCLEOTIDE SEQUENCE [LARGE SCALE GENOMIC DNA]</scope>
    <source>
        <strain>Sheeba</strain>
    </source>
</reference>
<protein>
    <recommendedName>
        <fullName evidence="1">Small ribosomal subunit protein uS17</fullName>
    </recommendedName>
    <alternativeName>
        <fullName evidence="2">30S ribosomal protein S17</fullName>
    </alternativeName>
</protein>
<name>RS17_HELAH</name>
<dbReference type="EMBL" id="AM260522">
    <property type="protein sequence ID" value="CAJ98997.1"/>
    <property type="molecule type" value="Genomic_DNA"/>
</dbReference>
<dbReference type="RefSeq" id="WP_011577117.1">
    <property type="nucleotide sequence ID" value="NC_008229.1"/>
</dbReference>
<dbReference type="SMR" id="Q17ZC9"/>
<dbReference type="STRING" id="382638.Hac_0145"/>
<dbReference type="GeneID" id="31757674"/>
<dbReference type="KEGG" id="hac:Hac_0145"/>
<dbReference type="eggNOG" id="COG0186">
    <property type="taxonomic scope" value="Bacteria"/>
</dbReference>
<dbReference type="HOGENOM" id="CLU_073626_1_1_7"/>
<dbReference type="OrthoDB" id="9811714at2"/>
<dbReference type="BioCyc" id="HACI382638:HAC_RS00625-MONOMER"/>
<dbReference type="Proteomes" id="UP000000775">
    <property type="component" value="Chromosome"/>
</dbReference>
<dbReference type="GO" id="GO:0022627">
    <property type="term" value="C:cytosolic small ribosomal subunit"/>
    <property type="evidence" value="ECO:0007669"/>
    <property type="project" value="TreeGrafter"/>
</dbReference>
<dbReference type="GO" id="GO:0019843">
    <property type="term" value="F:rRNA binding"/>
    <property type="evidence" value="ECO:0007669"/>
    <property type="project" value="UniProtKB-UniRule"/>
</dbReference>
<dbReference type="GO" id="GO:0003735">
    <property type="term" value="F:structural constituent of ribosome"/>
    <property type="evidence" value="ECO:0007669"/>
    <property type="project" value="InterPro"/>
</dbReference>
<dbReference type="GO" id="GO:0006412">
    <property type="term" value="P:translation"/>
    <property type="evidence" value="ECO:0007669"/>
    <property type="project" value="UniProtKB-UniRule"/>
</dbReference>
<dbReference type="CDD" id="cd00364">
    <property type="entry name" value="Ribosomal_uS17"/>
    <property type="match status" value="1"/>
</dbReference>
<dbReference type="Gene3D" id="2.40.50.140">
    <property type="entry name" value="Nucleic acid-binding proteins"/>
    <property type="match status" value="1"/>
</dbReference>
<dbReference type="HAMAP" id="MF_01345_B">
    <property type="entry name" value="Ribosomal_uS17_B"/>
    <property type="match status" value="1"/>
</dbReference>
<dbReference type="InterPro" id="IPR012340">
    <property type="entry name" value="NA-bd_OB-fold"/>
</dbReference>
<dbReference type="InterPro" id="IPR000266">
    <property type="entry name" value="Ribosomal_uS17"/>
</dbReference>
<dbReference type="InterPro" id="IPR019984">
    <property type="entry name" value="Ribosomal_uS17_bact/chlr"/>
</dbReference>
<dbReference type="InterPro" id="IPR019979">
    <property type="entry name" value="Ribosomal_uS17_CS"/>
</dbReference>
<dbReference type="NCBIfam" id="NF004123">
    <property type="entry name" value="PRK05610.1"/>
    <property type="match status" value="1"/>
</dbReference>
<dbReference type="NCBIfam" id="TIGR03635">
    <property type="entry name" value="uS17_bact"/>
    <property type="match status" value="1"/>
</dbReference>
<dbReference type="PANTHER" id="PTHR10744">
    <property type="entry name" value="40S RIBOSOMAL PROTEIN S11 FAMILY MEMBER"/>
    <property type="match status" value="1"/>
</dbReference>
<dbReference type="PANTHER" id="PTHR10744:SF1">
    <property type="entry name" value="SMALL RIBOSOMAL SUBUNIT PROTEIN US17M"/>
    <property type="match status" value="1"/>
</dbReference>
<dbReference type="Pfam" id="PF00366">
    <property type="entry name" value="Ribosomal_S17"/>
    <property type="match status" value="1"/>
</dbReference>
<dbReference type="PRINTS" id="PR00973">
    <property type="entry name" value="RIBOSOMALS17"/>
</dbReference>
<dbReference type="SUPFAM" id="SSF50249">
    <property type="entry name" value="Nucleic acid-binding proteins"/>
    <property type="match status" value="1"/>
</dbReference>
<dbReference type="PROSITE" id="PS00056">
    <property type="entry name" value="RIBOSOMAL_S17"/>
    <property type="match status" value="1"/>
</dbReference>
<evidence type="ECO:0000255" key="1">
    <source>
        <dbReference type="HAMAP-Rule" id="MF_01345"/>
    </source>
</evidence>
<evidence type="ECO:0000305" key="2"/>
<accession>Q17ZC9</accession>
<comment type="function">
    <text evidence="1">One of the primary rRNA binding proteins, it binds specifically to the 5'-end of 16S ribosomal RNA.</text>
</comment>
<comment type="subunit">
    <text evidence="1">Part of the 30S ribosomal subunit.</text>
</comment>
<comment type="similarity">
    <text evidence="1">Belongs to the universal ribosomal protein uS17 family.</text>
</comment>
<organism>
    <name type="scientific">Helicobacter acinonychis (strain Sheeba)</name>
    <dbReference type="NCBI Taxonomy" id="382638"/>
    <lineage>
        <taxon>Bacteria</taxon>
        <taxon>Pseudomonadati</taxon>
        <taxon>Campylobacterota</taxon>
        <taxon>Epsilonproteobacteria</taxon>
        <taxon>Campylobacterales</taxon>
        <taxon>Helicobacteraceae</taxon>
        <taxon>Helicobacter</taxon>
    </lineage>
</organism>
<proteinExistence type="inferred from homology"/>
<keyword id="KW-0687">Ribonucleoprotein</keyword>
<keyword id="KW-0689">Ribosomal protein</keyword>
<keyword id="KW-0694">RNA-binding</keyword>
<keyword id="KW-0699">rRNA-binding</keyword>
<sequence length="86" mass="9896">MNTKEPHKRVVQGKVISKFAEKSAVILVERKVVHKKYRKIVKKFKKYTIHDQDNQVKVGDFVSAIECKPLSKTKSFTLKEILVVGV</sequence>
<feature type="chain" id="PRO_1000054963" description="Small ribosomal subunit protein uS17">
    <location>
        <begin position="1"/>
        <end position="86"/>
    </location>
</feature>